<organism>
    <name type="scientific">Serratia proteamaculans (strain 568)</name>
    <dbReference type="NCBI Taxonomy" id="399741"/>
    <lineage>
        <taxon>Bacteria</taxon>
        <taxon>Pseudomonadati</taxon>
        <taxon>Pseudomonadota</taxon>
        <taxon>Gammaproteobacteria</taxon>
        <taxon>Enterobacterales</taxon>
        <taxon>Yersiniaceae</taxon>
        <taxon>Serratia</taxon>
    </lineage>
</organism>
<comment type="similarity">
    <text evidence="1">Belongs to the UPF0149 family.</text>
</comment>
<gene>
    <name type="ordered locus">Spro_3920</name>
</gene>
<sequence length="192" mass="21436">MSIQNTFPSYQSLTLALNQQAVALTAAEMHGLISGLLCGGSRDAGWQSLVYDLTNEGVAFPQALSLPLQQLHEITRETLEDDDFMFQLMMPEGETVSVFDRADALSGWVNHFLLGLGMMQPKLAQVKDEVGEAIDDLRNIAQLGYEEDEDQEELEHSLEEVVEYVRMAAILCHTEFTRRKPTAPENAKPTLH</sequence>
<reference key="1">
    <citation type="submission" date="2007-09" db="EMBL/GenBank/DDBJ databases">
        <title>Complete sequence of chromosome of Serratia proteamaculans 568.</title>
        <authorList>
            <consortium name="US DOE Joint Genome Institute"/>
            <person name="Copeland A."/>
            <person name="Lucas S."/>
            <person name="Lapidus A."/>
            <person name="Barry K."/>
            <person name="Glavina del Rio T."/>
            <person name="Dalin E."/>
            <person name="Tice H."/>
            <person name="Pitluck S."/>
            <person name="Chain P."/>
            <person name="Malfatti S."/>
            <person name="Shin M."/>
            <person name="Vergez L."/>
            <person name="Schmutz J."/>
            <person name="Larimer F."/>
            <person name="Land M."/>
            <person name="Hauser L."/>
            <person name="Kyrpides N."/>
            <person name="Kim E."/>
            <person name="Taghavi S."/>
            <person name="Newman L."/>
            <person name="Vangronsveld J."/>
            <person name="van der Lelie D."/>
            <person name="Richardson P."/>
        </authorList>
    </citation>
    <scope>NUCLEOTIDE SEQUENCE [LARGE SCALE GENOMIC DNA]</scope>
    <source>
        <strain>568</strain>
    </source>
</reference>
<feature type="chain" id="PRO_1000059832" description="UPF0149 protein Spro_3920">
    <location>
        <begin position="1"/>
        <end position="192"/>
    </location>
</feature>
<dbReference type="EMBL" id="CP000826">
    <property type="protein sequence ID" value="ABV43015.1"/>
    <property type="molecule type" value="Genomic_DNA"/>
</dbReference>
<dbReference type="SMR" id="A8GIS5"/>
<dbReference type="STRING" id="399741.Spro_3920"/>
<dbReference type="KEGG" id="spe:Spro_3920"/>
<dbReference type="eggNOG" id="COG3079">
    <property type="taxonomic scope" value="Bacteria"/>
</dbReference>
<dbReference type="HOGENOM" id="CLU_085336_1_0_6"/>
<dbReference type="OrthoDB" id="9783391at2"/>
<dbReference type="GO" id="GO:0005829">
    <property type="term" value="C:cytosol"/>
    <property type="evidence" value="ECO:0007669"/>
    <property type="project" value="TreeGrafter"/>
</dbReference>
<dbReference type="FunFam" id="1.20.120.740:FF:000001">
    <property type="entry name" value="UPF0149 protein YgfB"/>
    <property type="match status" value="1"/>
</dbReference>
<dbReference type="Gene3D" id="1.20.120.740">
    <property type="entry name" value="YgfB uncharacterised protein family UPF0149, PF03695"/>
    <property type="match status" value="1"/>
</dbReference>
<dbReference type="HAMAP" id="MF_00346">
    <property type="entry name" value="UPF0149"/>
    <property type="match status" value="1"/>
</dbReference>
<dbReference type="InterPro" id="IPR011978">
    <property type="entry name" value="YgfB-like"/>
</dbReference>
<dbReference type="InterPro" id="IPR036255">
    <property type="entry name" value="YgfB-like_sf"/>
</dbReference>
<dbReference type="NCBIfam" id="NF002477">
    <property type="entry name" value="PRK01736.1"/>
    <property type="match status" value="1"/>
</dbReference>
<dbReference type="NCBIfam" id="TIGR02292">
    <property type="entry name" value="ygfB_yecA"/>
    <property type="match status" value="1"/>
</dbReference>
<dbReference type="PANTHER" id="PTHR37528">
    <property type="entry name" value="UPF0149 PROTEIN YGFB"/>
    <property type="match status" value="1"/>
</dbReference>
<dbReference type="PANTHER" id="PTHR37528:SF1">
    <property type="entry name" value="UPF0149 PROTEIN YGFB"/>
    <property type="match status" value="1"/>
</dbReference>
<dbReference type="Pfam" id="PF03695">
    <property type="entry name" value="UPF0149"/>
    <property type="match status" value="1"/>
</dbReference>
<dbReference type="SUPFAM" id="SSF101327">
    <property type="entry name" value="YgfB-like"/>
    <property type="match status" value="1"/>
</dbReference>
<accession>A8GIS5</accession>
<name>Y3920_SERP5</name>
<protein>
    <recommendedName>
        <fullName evidence="1">UPF0149 protein Spro_3920</fullName>
    </recommendedName>
</protein>
<proteinExistence type="inferred from homology"/>
<evidence type="ECO:0000255" key="1">
    <source>
        <dbReference type="HAMAP-Rule" id="MF_00346"/>
    </source>
</evidence>